<name>TNAA_ECO81</name>
<protein>
    <recommendedName>
        <fullName evidence="1">Tryptophanase</fullName>
        <ecNumber evidence="1">4.1.99.1</ecNumber>
    </recommendedName>
    <alternativeName>
        <fullName evidence="1">L-tryptophan indole-lyase</fullName>
        <shortName evidence="1">TNase</shortName>
    </alternativeName>
</protein>
<evidence type="ECO:0000255" key="1">
    <source>
        <dbReference type="HAMAP-Rule" id="MF_00544"/>
    </source>
</evidence>
<accession>B7N212</accession>
<reference key="1">
    <citation type="journal article" date="2009" name="PLoS Genet.">
        <title>Organised genome dynamics in the Escherichia coli species results in highly diverse adaptive paths.</title>
        <authorList>
            <person name="Touchon M."/>
            <person name="Hoede C."/>
            <person name="Tenaillon O."/>
            <person name="Barbe V."/>
            <person name="Baeriswyl S."/>
            <person name="Bidet P."/>
            <person name="Bingen E."/>
            <person name="Bonacorsi S."/>
            <person name="Bouchier C."/>
            <person name="Bouvet O."/>
            <person name="Calteau A."/>
            <person name="Chiapello H."/>
            <person name="Clermont O."/>
            <person name="Cruveiller S."/>
            <person name="Danchin A."/>
            <person name="Diard M."/>
            <person name="Dossat C."/>
            <person name="Karoui M.E."/>
            <person name="Frapy E."/>
            <person name="Garry L."/>
            <person name="Ghigo J.M."/>
            <person name="Gilles A.M."/>
            <person name="Johnson J."/>
            <person name="Le Bouguenec C."/>
            <person name="Lescat M."/>
            <person name="Mangenot S."/>
            <person name="Martinez-Jehanne V."/>
            <person name="Matic I."/>
            <person name="Nassif X."/>
            <person name="Oztas S."/>
            <person name="Petit M.A."/>
            <person name="Pichon C."/>
            <person name="Rouy Z."/>
            <person name="Ruf C.S."/>
            <person name="Schneider D."/>
            <person name="Tourret J."/>
            <person name="Vacherie B."/>
            <person name="Vallenet D."/>
            <person name="Medigue C."/>
            <person name="Rocha E.P.C."/>
            <person name="Denamur E."/>
        </authorList>
    </citation>
    <scope>NUCLEOTIDE SEQUENCE [LARGE SCALE GENOMIC DNA]</scope>
    <source>
        <strain>ED1a</strain>
    </source>
</reference>
<sequence length="471" mass="52773">MENFKHLPEPFRIRVIEPVKRTTRAYREEAIIKSGMNPFLLDSEDVFIDLLTDSGTGAVTQSMQAAMMRGDEAYSGSRSYYALAESVKNIFGYQYTIPTHQGRGAEQIYIPVLIKKREQEKGLDRSKMVAFSNYFFDTTQGHSQINGCTVRNVYIKEAFDTGVRYDFKGNFDLEGLERGIEEVGPNNVPYIVATITSNSAGGQPVSLANLKAMYSIAKKYDIPVVMDSARFAENAYFIKQREAEYKDWTIEQITRETYKYADMLAMSAKKDAMVPMGGLLCMKDDSFFDVYTECRTLCVVQEGFPTYGGLEGGAMERLAVGLYDGMNLDWLAYRIAQVQYLVDGLEEIGVVCQQAGGHAAFVDAGKLLPHIPADQFPAQALACELYKVAGIRAVEIGSFLLGRDPKTGKQLPCPAELLRLTIPRATYTQTHMDFIIEAFKHVKENAANIKGLTFTYEPKVLRHFTAKLKEV</sequence>
<comment type="catalytic activity">
    <reaction evidence="1">
        <text>L-tryptophan + H2O = indole + pyruvate + NH4(+)</text>
        <dbReference type="Rhea" id="RHEA:19553"/>
        <dbReference type="ChEBI" id="CHEBI:15361"/>
        <dbReference type="ChEBI" id="CHEBI:15377"/>
        <dbReference type="ChEBI" id="CHEBI:16881"/>
        <dbReference type="ChEBI" id="CHEBI:28938"/>
        <dbReference type="ChEBI" id="CHEBI:57912"/>
        <dbReference type="EC" id="4.1.99.1"/>
    </reaction>
</comment>
<comment type="cofactor">
    <cofactor evidence="1">
        <name>pyridoxal 5'-phosphate</name>
        <dbReference type="ChEBI" id="CHEBI:597326"/>
    </cofactor>
</comment>
<comment type="pathway">
    <text evidence="1">Amino-acid degradation; L-tryptophan degradation via pyruvate pathway; indole and pyruvate from L-tryptophan: step 1/1.</text>
</comment>
<comment type="subunit">
    <text evidence="1">Homotetramer.</text>
</comment>
<comment type="similarity">
    <text evidence="1">Belongs to the beta-eliminating lyase family.</text>
</comment>
<proteinExistence type="inferred from homology"/>
<dbReference type="EC" id="4.1.99.1" evidence="1"/>
<dbReference type="EMBL" id="CU928162">
    <property type="protein sequence ID" value="CAR10383.1"/>
    <property type="molecule type" value="Genomic_DNA"/>
</dbReference>
<dbReference type="RefSeq" id="WP_001295247.1">
    <property type="nucleotide sequence ID" value="NC_011745.1"/>
</dbReference>
<dbReference type="SMR" id="B7N212"/>
<dbReference type="GeneID" id="75205423"/>
<dbReference type="KEGG" id="ecq:ECED1_4399"/>
<dbReference type="HOGENOM" id="CLU_047223_0_0_6"/>
<dbReference type="UniPathway" id="UPA00332">
    <property type="reaction ID" value="UER00452"/>
</dbReference>
<dbReference type="Proteomes" id="UP000000748">
    <property type="component" value="Chromosome"/>
</dbReference>
<dbReference type="GO" id="GO:0009034">
    <property type="term" value="F:tryptophanase activity"/>
    <property type="evidence" value="ECO:0007669"/>
    <property type="project" value="UniProtKB-UniRule"/>
</dbReference>
<dbReference type="FunFam" id="3.40.640.10:FF:000039">
    <property type="entry name" value="Tryptophanase"/>
    <property type="match status" value="1"/>
</dbReference>
<dbReference type="Gene3D" id="3.90.1150.10">
    <property type="entry name" value="Aspartate Aminotransferase, domain 1"/>
    <property type="match status" value="1"/>
</dbReference>
<dbReference type="Gene3D" id="3.40.640.10">
    <property type="entry name" value="Type I PLP-dependent aspartate aminotransferase-like (Major domain)"/>
    <property type="match status" value="1"/>
</dbReference>
<dbReference type="HAMAP" id="MF_00544">
    <property type="entry name" value="Tryptophanase"/>
    <property type="match status" value="1"/>
</dbReference>
<dbReference type="InterPro" id="IPR001597">
    <property type="entry name" value="ArAA_b-elim_lyase/Thr_aldolase"/>
</dbReference>
<dbReference type="InterPro" id="IPR011166">
    <property type="entry name" value="Beta-eliminating_lyase"/>
</dbReference>
<dbReference type="InterPro" id="IPR015424">
    <property type="entry name" value="PyrdxlP-dep_Trfase"/>
</dbReference>
<dbReference type="InterPro" id="IPR015421">
    <property type="entry name" value="PyrdxlP-dep_Trfase_major"/>
</dbReference>
<dbReference type="InterPro" id="IPR015422">
    <property type="entry name" value="PyrdxlP-dep_Trfase_small"/>
</dbReference>
<dbReference type="InterPro" id="IPR013440">
    <property type="entry name" value="TNase"/>
</dbReference>
<dbReference type="InterPro" id="IPR018176">
    <property type="entry name" value="Tryptophanase_CS"/>
</dbReference>
<dbReference type="NCBIfam" id="NF009709">
    <property type="entry name" value="PRK13238.1"/>
    <property type="match status" value="1"/>
</dbReference>
<dbReference type="NCBIfam" id="TIGR02617">
    <property type="entry name" value="tnaA_trp_ase"/>
    <property type="match status" value="1"/>
</dbReference>
<dbReference type="PANTHER" id="PTHR32325">
    <property type="entry name" value="BETA-ELIMINATING LYASE-LIKE PROTEIN-RELATED"/>
    <property type="match status" value="1"/>
</dbReference>
<dbReference type="PANTHER" id="PTHR32325:SF4">
    <property type="entry name" value="TRYPTOPHANASE"/>
    <property type="match status" value="1"/>
</dbReference>
<dbReference type="Pfam" id="PF01212">
    <property type="entry name" value="Beta_elim_lyase"/>
    <property type="match status" value="1"/>
</dbReference>
<dbReference type="PIRSF" id="PIRSF001386">
    <property type="entry name" value="Trpase"/>
    <property type="match status" value="1"/>
</dbReference>
<dbReference type="SUPFAM" id="SSF53383">
    <property type="entry name" value="PLP-dependent transferases"/>
    <property type="match status" value="1"/>
</dbReference>
<dbReference type="PROSITE" id="PS00853">
    <property type="entry name" value="BETA_ELIM_LYASE"/>
    <property type="match status" value="1"/>
</dbReference>
<feature type="chain" id="PRO_1000146593" description="Tryptophanase">
    <location>
        <begin position="1"/>
        <end position="471"/>
    </location>
</feature>
<feature type="modified residue" description="N6-acetyllysine" evidence="1">
    <location>
        <position position="5"/>
    </location>
</feature>
<feature type="modified residue" description="N6-acetyllysine" evidence="1">
    <location>
        <position position="115"/>
    </location>
</feature>
<feature type="modified residue" description="N6-acetyllysine" evidence="1">
    <location>
        <position position="156"/>
    </location>
</feature>
<feature type="modified residue" description="N6-(pyridoxal phosphate)lysine" evidence="1">
    <location>
        <position position="270"/>
    </location>
</feature>
<feature type="modified residue" description="N6-acetyllysine" evidence="1">
    <location>
        <position position="450"/>
    </location>
</feature>
<keyword id="KW-0007">Acetylation</keyword>
<keyword id="KW-0456">Lyase</keyword>
<keyword id="KW-0663">Pyridoxal phosphate</keyword>
<keyword id="KW-0823">Tryptophan catabolism</keyword>
<organism>
    <name type="scientific">Escherichia coli O81 (strain ED1a)</name>
    <dbReference type="NCBI Taxonomy" id="585397"/>
    <lineage>
        <taxon>Bacteria</taxon>
        <taxon>Pseudomonadati</taxon>
        <taxon>Pseudomonadota</taxon>
        <taxon>Gammaproteobacteria</taxon>
        <taxon>Enterobacterales</taxon>
        <taxon>Enterobacteriaceae</taxon>
        <taxon>Escherichia</taxon>
    </lineage>
</organism>
<gene>
    <name evidence="1" type="primary">tnaA</name>
    <name type="ordered locus">ECED1_4399</name>
</gene>